<proteinExistence type="inferred from homology"/>
<dbReference type="EC" id="6.2.1.5" evidence="1"/>
<dbReference type="EMBL" id="CP000768">
    <property type="protein sequence ID" value="ABS44414.1"/>
    <property type="molecule type" value="Genomic_DNA"/>
</dbReference>
<dbReference type="SMR" id="A7H4K9"/>
<dbReference type="KEGG" id="cjd:JJD26997_1397"/>
<dbReference type="HOGENOM" id="CLU_037430_0_2_7"/>
<dbReference type="UniPathway" id="UPA00223">
    <property type="reaction ID" value="UER00999"/>
</dbReference>
<dbReference type="Proteomes" id="UP000002302">
    <property type="component" value="Chromosome"/>
</dbReference>
<dbReference type="GO" id="GO:0005829">
    <property type="term" value="C:cytosol"/>
    <property type="evidence" value="ECO:0007669"/>
    <property type="project" value="TreeGrafter"/>
</dbReference>
<dbReference type="GO" id="GO:0042709">
    <property type="term" value="C:succinate-CoA ligase complex"/>
    <property type="evidence" value="ECO:0007669"/>
    <property type="project" value="TreeGrafter"/>
</dbReference>
<dbReference type="GO" id="GO:0005524">
    <property type="term" value="F:ATP binding"/>
    <property type="evidence" value="ECO:0007669"/>
    <property type="project" value="UniProtKB-UniRule"/>
</dbReference>
<dbReference type="GO" id="GO:0000287">
    <property type="term" value="F:magnesium ion binding"/>
    <property type="evidence" value="ECO:0007669"/>
    <property type="project" value="UniProtKB-UniRule"/>
</dbReference>
<dbReference type="GO" id="GO:0004775">
    <property type="term" value="F:succinate-CoA ligase (ADP-forming) activity"/>
    <property type="evidence" value="ECO:0007669"/>
    <property type="project" value="UniProtKB-UniRule"/>
</dbReference>
<dbReference type="GO" id="GO:0004776">
    <property type="term" value="F:succinate-CoA ligase (GDP-forming) activity"/>
    <property type="evidence" value="ECO:0007669"/>
    <property type="project" value="RHEA"/>
</dbReference>
<dbReference type="GO" id="GO:0006104">
    <property type="term" value="P:succinyl-CoA metabolic process"/>
    <property type="evidence" value="ECO:0007669"/>
    <property type="project" value="TreeGrafter"/>
</dbReference>
<dbReference type="GO" id="GO:0006099">
    <property type="term" value="P:tricarboxylic acid cycle"/>
    <property type="evidence" value="ECO:0007669"/>
    <property type="project" value="UniProtKB-UniRule"/>
</dbReference>
<dbReference type="FunFam" id="3.30.1490.20:FF:000002">
    <property type="entry name" value="Succinate--CoA ligase [ADP-forming] subunit beta"/>
    <property type="match status" value="1"/>
</dbReference>
<dbReference type="FunFam" id="3.30.470.20:FF:000002">
    <property type="entry name" value="Succinate--CoA ligase [ADP-forming] subunit beta"/>
    <property type="match status" value="1"/>
</dbReference>
<dbReference type="FunFam" id="3.40.50.261:FF:000001">
    <property type="entry name" value="Succinate--CoA ligase [ADP-forming] subunit beta"/>
    <property type="match status" value="1"/>
</dbReference>
<dbReference type="Gene3D" id="3.30.1490.20">
    <property type="entry name" value="ATP-grasp fold, A domain"/>
    <property type="match status" value="1"/>
</dbReference>
<dbReference type="Gene3D" id="3.30.470.20">
    <property type="entry name" value="ATP-grasp fold, B domain"/>
    <property type="match status" value="1"/>
</dbReference>
<dbReference type="Gene3D" id="3.40.50.261">
    <property type="entry name" value="Succinyl-CoA synthetase domains"/>
    <property type="match status" value="1"/>
</dbReference>
<dbReference type="HAMAP" id="MF_00558">
    <property type="entry name" value="Succ_CoA_beta"/>
    <property type="match status" value="1"/>
</dbReference>
<dbReference type="InterPro" id="IPR013650">
    <property type="entry name" value="ATP-grasp_succ-CoA_synth-type"/>
</dbReference>
<dbReference type="InterPro" id="IPR013815">
    <property type="entry name" value="ATP_grasp_subdomain_1"/>
</dbReference>
<dbReference type="InterPro" id="IPR017866">
    <property type="entry name" value="Succ-CoA_synthase_bsu_CS"/>
</dbReference>
<dbReference type="InterPro" id="IPR005811">
    <property type="entry name" value="SUCC_ACL_C"/>
</dbReference>
<dbReference type="InterPro" id="IPR005809">
    <property type="entry name" value="Succ_CoA_ligase-like_bsu"/>
</dbReference>
<dbReference type="InterPro" id="IPR016102">
    <property type="entry name" value="Succinyl-CoA_synth-like"/>
</dbReference>
<dbReference type="NCBIfam" id="NF001913">
    <property type="entry name" value="PRK00696.1"/>
    <property type="match status" value="1"/>
</dbReference>
<dbReference type="NCBIfam" id="TIGR01016">
    <property type="entry name" value="sucCoAbeta"/>
    <property type="match status" value="1"/>
</dbReference>
<dbReference type="PANTHER" id="PTHR11815:SF10">
    <property type="entry name" value="SUCCINATE--COA LIGASE [GDP-FORMING] SUBUNIT BETA, MITOCHONDRIAL"/>
    <property type="match status" value="1"/>
</dbReference>
<dbReference type="PANTHER" id="PTHR11815">
    <property type="entry name" value="SUCCINYL-COA SYNTHETASE BETA CHAIN"/>
    <property type="match status" value="1"/>
</dbReference>
<dbReference type="Pfam" id="PF08442">
    <property type="entry name" value="ATP-grasp_2"/>
    <property type="match status" value="1"/>
</dbReference>
<dbReference type="Pfam" id="PF00549">
    <property type="entry name" value="Ligase_CoA"/>
    <property type="match status" value="1"/>
</dbReference>
<dbReference type="PIRSF" id="PIRSF001554">
    <property type="entry name" value="SucCS_beta"/>
    <property type="match status" value="1"/>
</dbReference>
<dbReference type="SUPFAM" id="SSF56059">
    <property type="entry name" value="Glutathione synthetase ATP-binding domain-like"/>
    <property type="match status" value="1"/>
</dbReference>
<dbReference type="SUPFAM" id="SSF52210">
    <property type="entry name" value="Succinyl-CoA synthetase domains"/>
    <property type="match status" value="1"/>
</dbReference>
<dbReference type="PROSITE" id="PS01217">
    <property type="entry name" value="SUCCINYL_COA_LIG_3"/>
    <property type="match status" value="1"/>
</dbReference>
<sequence length="387" mass="41696">MNIHEYQAKAIFADNGILTLKGKVAFSVDEAVSNAKELGGSVWAVKAQIHAGGRGLGGGVKIAKNLDEVKDYASKILGMNLVTHQTGPEGKLVQKLYIESGANIVKEYYLAILFNRMAEQITIIASSEGGMDIEKVAKESPGKIAKVGIDPQIGFKMFHGLEVARVLGLDKDEGKKLISMIAKLYKLYMDKDMNMLEINPLIKTAEGDFYALDAKCSFDDSALYRHPEIAELRDITEENPAEREAAEFGLSYVKLDGDVACMVNGAGLAMATMDIINYSGAKPANFLDVGGGASPETVAKAFEIILRDKNVKVIFINIFGGIVRCDRIANGILEATKNVEVNIPIVVRLDGTNAAEAKTILDNSNLKNIKAATNLKNGAELVKSLVG</sequence>
<gene>
    <name evidence="1" type="primary">sucC</name>
    <name type="ordered locus">JJD26997_1397</name>
</gene>
<name>SUCC_CAMJD</name>
<keyword id="KW-0067">ATP-binding</keyword>
<keyword id="KW-0436">Ligase</keyword>
<keyword id="KW-0460">Magnesium</keyword>
<keyword id="KW-0479">Metal-binding</keyword>
<keyword id="KW-0547">Nucleotide-binding</keyword>
<keyword id="KW-0816">Tricarboxylic acid cycle</keyword>
<evidence type="ECO:0000255" key="1">
    <source>
        <dbReference type="HAMAP-Rule" id="MF_00558"/>
    </source>
</evidence>
<feature type="chain" id="PRO_1000082054" description="Succinate--CoA ligase [ADP-forming] subunit beta">
    <location>
        <begin position="1"/>
        <end position="387"/>
    </location>
</feature>
<feature type="binding site" evidence="1">
    <location>
        <position position="46"/>
    </location>
    <ligand>
        <name>ATP</name>
        <dbReference type="ChEBI" id="CHEBI:30616"/>
    </ligand>
</feature>
<feature type="binding site" evidence="1">
    <location>
        <begin position="53"/>
        <end position="55"/>
    </location>
    <ligand>
        <name>ATP</name>
        <dbReference type="ChEBI" id="CHEBI:30616"/>
    </ligand>
</feature>
<feature type="binding site" evidence="1">
    <location>
        <position position="99"/>
    </location>
    <ligand>
        <name>ATP</name>
        <dbReference type="ChEBI" id="CHEBI:30616"/>
    </ligand>
</feature>
<feature type="binding site" evidence="1">
    <location>
        <position position="102"/>
    </location>
    <ligand>
        <name>ATP</name>
        <dbReference type="ChEBI" id="CHEBI:30616"/>
    </ligand>
</feature>
<feature type="binding site" evidence="1">
    <location>
        <position position="107"/>
    </location>
    <ligand>
        <name>ATP</name>
        <dbReference type="ChEBI" id="CHEBI:30616"/>
    </ligand>
</feature>
<feature type="binding site" evidence="1">
    <location>
        <position position="199"/>
    </location>
    <ligand>
        <name>Mg(2+)</name>
        <dbReference type="ChEBI" id="CHEBI:18420"/>
    </ligand>
</feature>
<feature type="binding site" evidence="1">
    <location>
        <position position="213"/>
    </location>
    <ligand>
        <name>Mg(2+)</name>
        <dbReference type="ChEBI" id="CHEBI:18420"/>
    </ligand>
</feature>
<feature type="binding site" evidence="1">
    <location>
        <position position="264"/>
    </location>
    <ligand>
        <name>substrate</name>
        <note>ligand shared with subunit alpha</note>
    </ligand>
</feature>
<feature type="binding site" evidence="1">
    <location>
        <begin position="321"/>
        <end position="323"/>
    </location>
    <ligand>
        <name>substrate</name>
        <note>ligand shared with subunit alpha</note>
    </ligand>
</feature>
<organism>
    <name type="scientific">Campylobacter jejuni subsp. doylei (strain ATCC BAA-1458 / RM4099 / 269.97)</name>
    <dbReference type="NCBI Taxonomy" id="360109"/>
    <lineage>
        <taxon>Bacteria</taxon>
        <taxon>Pseudomonadati</taxon>
        <taxon>Campylobacterota</taxon>
        <taxon>Epsilonproteobacteria</taxon>
        <taxon>Campylobacterales</taxon>
        <taxon>Campylobacteraceae</taxon>
        <taxon>Campylobacter</taxon>
    </lineage>
</organism>
<comment type="function">
    <text evidence="1">Succinyl-CoA synthetase functions in the citric acid cycle (TCA), coupling the hydrolysis of succinyl-CoA to the synthesis of either ATP or GTP and thus represents the only step of substrate-level phosphorylation in the TCA. The beta subunit provides nucleotide specificity of the enzyme and binds the substrate succinate, while the binding sites for coenzyme A and phosphate are found in the alpha subunit.</text>
</comment>
<comment type="catalytic activity">
    <reaction evidence="1">
        <text>succinate + ATP + CoA = succinyl-CoA + ADP + phosphate</text>
        <dbReference type="Rhea" id="RHEA:17661"/>
        <dbReference type="ChEBI" id="CHEBI:30031"/>
        <dbReference type="ChEBI" id="CHEBI:30616"/>
        <dbReference type="ChEBI" id="CHEBI:43474"/>
        <dbReference type="ChEBI" id="CHEBI:57287"/>
        <dbReference type="ChEBI" id="CHEBI:57292"/>
        <dbReference type="ChEBI" id="CHEBI:456216"/>
        <dbReference type="EC" id="6.2.1.5"/>
    </reaction>
    <physiologicalReaction direction="right-to-left" evidence="1">
        <dbReference type="Rhea" id="RHEA:17663"/>
    </physiologicalReaction>
</comment>
<comment type="catalytic activity">
    <reaction evidence="1">
        <text>GTP + succinate + CoA = succinyl-CoA + GDP + phosphate</text>
        <dbReference type="Rhea" id="RHEA:22120"/>
        <dbReference type="ChEBI" id="CHEBI:30031"/>
        <dbReference type="ChEBI" id="CHEBI:37565"/>
        <dbReference type="ChEBI" id="CHEBI:43474"/>
        <dbReference type="ChEBI" id="CHEBI:57287"/>
        <dbReference type="ChEBI" id="CHEBI:57292"/>
        <dbReference type="ChEBI" id="CHEBI:58189"/>
    </reaction>
    <physiologicalReaction direction="right-to-left" evidence="1">
        <dbReference type="Rhea" id="RHEA:22122"/>
    </physiologicalReaction>
</comment>
<comment type="cofactor">
    <cofactor evidence="1">
        <name>Mg(2+)</name>
        <dbReference type="ChEBI" id="CHEBI:18420"/>
    </cofactor>
    <text evidence="1">Binds 1 Mg(2+) ion per subunit.</text>
</comment>
<comment type="pathway">
    <text evidence="1">Carbohydrate metabolism; tricarboxylic acid cycle; succinate from succinyl-CoA (ligase route): step 1/1.</text>
</comment>
<comment type="subunit">
    <text evidence="1">Heterotetramer of two alpha and two beta subunits.</text>
</comment>
<comment type="similarity">
    <text evidence="1">Belongs to the succinate/malate CoA ligase beta subunit family.</text>
</comment>
<accession>A7H4K9</accession>
<protein>
    <recommendedName>
        <fullName evidence="1">Succinate--CoA ligase [ADP-forming] subunit beta</fullName>
        <ecNumber evidence="1">6.2.1.5</ecNumber>
    </recommendedName>
    <alternativeName>
        <fullName evidence="1">Succinyl-CoA synthetase subunit beta</fullName>
        <shortName evidence="1">SCS-beta</shortName>
    </alternativeName>
</protein>
<reference key="1">
    <citation type="submission" date="2007-07" db="EMBL/GenBank/DDBJ databases">
        <title>Complete genome sequence of Campylobacter jejuni subsp doylei 269.97 isolated from human blood.</title>
        <authorList>
            <person name="Fouts D.E."/>
            <person name="Mongodin E.F."/>
            <person name="Puiu D."/>
            <person name="Sebastian Y."/>
            <person name="Miller W.G."/>
            <person name="Mandrell R.E."/>
            <person name="Lastovica A.J."/>
            <person name="Nelson K.E."/>
        </authorList>
    </citation>
    <scope>NUCLEOTIDE SEQUENCE [LARGE SCALE GENOMIC DNA]</scope>
    <source>
        <strain>ATCC BAA-1458 / RM4099 / 269.97</strain>
    </source>
</reference>